<accession>Q4UMR3</accession>
<name>RL18_RICFE</name>
<organism>
    <name type="scientific">Rickettsia felis (strain ATCC VR-1525 / URRWXCal2)</name>
    <name type="common">Rickettsia azadi</name>
    <dbReference type="NCBI Taxonomy" id="315456"/>
    <lineage>
        <taxon>Bacteria</taxon>
        <taxon>Pseudomonadati</taxon>
        <taxon>Pseudomonadota</taxon>
        <taxon>Alphaproteobacteria</taxon>
        <taxon>Rickettsiales</taxon>
        <taxon>Rickettsiaceae</taxon>
        <taxon>Rickettsieae</taxon>
        <taxon>Rickettsia</taxon>
        <taxon>spotted fever group</taxon>
    </lineage>
</organism>
<sequence length="118" mass="13391">MRSAKLKFEKRRSRIRHKISKTSNRVRLSIFKSGRHIYAQIIDDSKSITIASASTLDKKIKKFKKSHCNIENAIKVGEEIAKKADSAGIKEVVFDRGGYKYHGVVKALADAAREKIKF</sequence>
<feature type="chain" id="PRO_0000131331" description="Large ribosomal subunit protein uL18">
    <location>
        <begin position="1"/>
        <end position="118"/>
    </location>
</feature>
<gene>
    <name evidence="1" type="primary">rplR</name>
    <name type="ordered locus">RF_0294</name>
</gene>
<evidence type="ECO:0000255" key="1">
    <source>
        <dbReference type="HAMAP-Rule" id="MF_01337"/>
    </source>
</evidence>
<evidence type="ECO:0000305" key="2"/>
<dbReference type="EMBL" id="CP000053">
    <property type="protein sequence ID" value="AAY61145.1"/>
    <property type="molecule type" value="Genomic_DNA"/>
</dbReference>
<dbReference type="SMR" id="Q4UMR3"/>
<dbReference type="STRING" id="315456.RF_0294"/>
<dbReference type="KEGG" id="rfe:RF_0294"/>
<dbReference type="eggNOG" id="COG0256">
    <property type="taxonomic scope" value="Bacteria"/>
</dbReference>
<dbReference type="HOGENOM" id="CLU_098841_0_1_5"/>
<dbReference type="OrthoDB" id="9810939at2"/>
<dbReference type="Proteomes" id="UP000008548">
    <property type="component" value="Chromosome"/>
</dbReference>
<dbReference type="GO" id="GO:0022625">
    <property type="term" value="C:cytosolic large ribosomal subunit"/>
    <property type="evidence" value="ECO:0007669"/>
    <property type="project" value="TreeGrafter"/>
</dbReference>
<dbReference type="GO" id="GO:0008097">
    <property type="term" value="F:5S rRNA binding"/>
    <property type="evidence" value="ECO:0007669"/>
    <property type="project" value="TreeGrafter"/>
</dbReference>
<dbReference type="GO" id="GO:0003735">
    <property type="term" value="F:structural constituent of ribosome"/>
    <property type="evidence" value="ECO:0007669"/>
    <property type="project" value="InterPro"/>
</dbReference>
<dbReference type="GO" id="GO:0006412">
    <property type="term" value="P:translation"/>
    <property type="evidence" value="ECO:0007669"/>
    <property type="project" value="UniProtKB-UniRule"/>
</dbReference>
<dbReference type="CDD" id="cd00432">
    <property type="entry name" value="Ribosomal_L18_L5e"/>
    <property type="match status" value="1"/>
</dbReference>
<dbReference type="FunFam" id="3.30.420.100:FF:000001">
    <property type="entry name" value="50S ribosomal protein L18"/>
    <property type="match status" value="1"/>
</dbReference>
<dbReference type="Gene3D" id="3.30.420.100">
    <property type="match status" value="1"/>
</dbReference>
<dbReference type="HAMAP" id="MF_01337_B">
    <property type="entry name" value="Ribosomal_uL18_B"/>
    <property type="match status" value="1"/>
</dbReference>
<dbReference type="InterPro" id="IPR004389">
    <property type="entry name" value="Ribosomal_uL18_bac-type"/>
</dbReference>
<dbReference type="InterPro" id="IPR005484">
    <property type="entry name" value="Ribosomal_uL18_bac/euk"/>
</dbReference>
<dbReference type="NCBIfam" id="TIGR00060">
    <property type="entry name" value="L18_bact"/>
    <property type="match status" value="1"/>
</dbReference>
<dbReference type="PANTHER" id="PTHR12899">
    <property type="entry name" value="39S RIBOSOMAL PROTEIN L18, MITOCHONDRIAL"/>
    <property type="match status" value="1"/>
</dbReference>
<dbReference type="PANTHER" id="PTHR12899:SF3">
    <property type="entry name" value="LARGE RIBOSOMAL SUBUNIT PROTEIN UL18M"/>
    <property type="match status" value="1"/>
</dbReference>
<dbReference type="Pfam" id="PF00861">
    <property type="entry name" value="Ribosomal_L18p"/>
    <property type="match status" value="1"/>
</dbReference>
<dbReference type="SUPFAM" id="SSF53137">
    <property type="entry name" value="Translational machinery components"/>
    <property type="match status" value="1"/>
</dbReference>
<comment type="function">
    <text evidence="1">This is one of the proteins that bind and probably mediate the attachment of the 5S RNA into the large ribosomal subunit, where it forms part of the central protuberance.</text>
</comment>
<comment type="subunit">
    <text evidence="1">Part of the 50S ribosomal subunit; part of the 5S rRNA/L5/L18/L25 subcomplex. Contacts the 5S and 23S rRNAs.</text>
</comment>
<comment type="similarity">
    <text evidence="1">Belongs to the universal ribosomal protein uL18 family.</text>
</comment>
<reference key="1">
    <citation type="journal article" date="2005" name="PLoS Biol.">
        <title>The genome sequence of Rickettsia felis identifies the first putative conjugative plasmid in an obligate intracellular parasite.</title>
        <authorList>
            <person name="Ogata H."/>
            <person name="Renesto P."/>
            <person name="Audic S."/>
            <person name="Robert C."/>
            <person name="Blanc G."/>
            <person name="Fournier P.-E."/>
            <person name="Parinello H."/>
            <person name="Claverie J.-M."/>
            <person name="Raoult D."/>
        </authorList>
    </citation>
    <scope>NUCLEOTIDE SEQUENCE [LARGE SCALE GENOMIC DNA]</scope>
    <source>
        <strain>ATCC VR-1525 / URRWXCal2</strain>
    </source>
</reference>
<keyword id="KW-0687">Ribonucleoprotein</keyword>
<keyword id="KW-0689">Ribosomal protein</keyword>
<keyword id="KW-0694">RNA-binding</keyword>
<keyword id="KW-0699">rRNA-binding</keyword>
<protein>
    <recommendedName>
        <fullName evidence="1">Large ribosomal subunit protein uL18</fullName>
    </recommendedName>
    <alternativeName>
        <fullName evidence="2">50S ribosomal protein L18</fullName>
    </alternativeName>
</protein>
<proteinExistence type="inferred from homology"/>